<gene>
    <name evidence="1" type="primary">dxs</name>
    <name type="ordered locus">SeD_A0463</name>
</gene>
<protein>
    <recommendedName>
        <fullName evidence="1">1-deoxy-D-xylulose-5-phosphate synthase</fullName>
        <ecNumber evidence="1">2.2.1.7</ecNumber>
    </recommendedName>
    <alternativeName>
        <fullName evidence="1">1-deoxyxylulose-5-phosphate synthase</fullName>
        <shortName evidence="1">DXP synthase</shortName>
        <shortName evidence="1">DXPS</shortName>
    </alternativeName>
</protein>
<feature type="chain" id="PRO_1000115765" description="1-deoxy-D-xylulose-5-phosphate synthase">
    <location>
        <begin position="1"/>
        <end position="620"/>
    </location>
</feature>
<feature type="binding site" evidence="1">
    <location>
        <position position="80"/>
    </location>
    <ligand>
        <name>thiamine diphosphate</name>
        <dbReference type="ChEBI" id="CHEBI:58937"/>
    </ligand>
</feature>
<feature type="binding site" evidence="1">
    <location>
        <begin position="121"/>
        <end position="123"/>
    </location>
    <ligand>
        <name>thiamine diphosphate</name>
        <dbReference type="ChEBI" id="CHEBI:58937"/>
    </ligand>
</feature>
<feature type="binding site" evidence="1">
    <location>
        <position position="152"/>
    </location>
    <ligand>
        <name>Mg(2+)</name>
        <dbReference type="ChEBI" id="CHEBI:18420"/>
    </ligand>
</feature>
<feature type="binding site" evidence="1">
    <location>
        <begin position="153"/>
        <end position="154"/>
    </location>
    <ligand>
        <name>thiamine diphosphate</name>
        <dbReference type="ChEBI" id="CHEBI:58937"/>
    </ligand>
</feature>
<feature type="binding site" evidence="1">
    <location>
        <position position="181"/>
    </location>
    <ligand>
        <name>Mg(2+)</name>
        <dbReference type="ChEBI" id="CHEBI:18420"/>
    </ligand>
</feature>
<feature type="binding site" evidence="1">
    <location>
        <position position="181"/>
    </location>
    <ligand>
        <name>thiamine diphosphate</name>
        <dbReference type="ChEBI" id="CHEBI:58937"/>
    </ligand>
</feature>
<feature type="binding site" evidence="1">
    <location>
        <position position="288"/>
    </location>
    <ligand>
        <name>thiamine diphosphate</name>
        <dbReference type="ChEBI" id="CHEBI:58937"/>
    </ligand>
</feature>
<feature type="binding site" evidence="1">
    <location>
        <position position="370"/>
    </location>
    <ligand>
        <name>thiamine diphosphate</name>
        <dbReference type="ChEBI" id="CHEBI:58937"/>
    </ligand>
</feature>
<name>DXS_SALDC</name>
<dbReference type="EC" id="2.2.1.7" evidence="1"/>
<dbReference type="EMBL" id="CP001144">
    <property type="protein sequence ID" value="ACH77454.1"/>
    <property type="molecule type" value="Genomic_DNA"/>
</dbReference>
<dbReference type="RefSeq" id="WP_000006777.1">
    <property type="nucleotide sequence ID" value="NC_011205.1"/>
</dbReference>
<dbReference type="SMR" id="B5FKS7"/>
<dbReference type="KEGG" id="sed:SeD_A0463"/>
<dbReference type="HOGENOM" id="CLU_009227_1_4_6"/>
<dbReference type="UniPathway" id="UPA00064">
    <property type="reaction ID" value="UER00091"/>
</dbReference>
<dbReference type="Proteomes" id="UP000008322">
    <property type="component" value="Chromosome"/>
</dbReference>
<dbReference type="GO" id="GO:0005829">
    <property type="term" value="C:cytosol"/>
    <property type="evidence" value="ECO:0007669"/>
    <property type="project" value="TreeGrafter"/>
</dbReference>
<dbReference type="GO" id="GO:0008661">
    <property type="term" value="F:1-deoxy-D-xylulose-5-phosphate synthase activity"/>
    <property type="evidence" value="ECO:0007669"/>
    <property type="project" value="UniProtKB-UniRule"/>
</dbReference>
<dbReference type="GO" id="GO:0000287">
    <property type="term" value="F:magnesium ion binding"/>
    <property type="evidence" value="ECO:0007669"/>
    <property type="project" value="UniProtKB-UniRule"/>
</dbReference>
<dbReference type="GO" id="GO:0030976">
    <property type="term" value="F:thiamine pyrophosphate binding"/>
    <property type="evidence" value="ECO:0007669"/>
    <property type="project" value="UniProtKB-UniRule"/>
</dbReference>
<dbReference type="GO" id="GO:0052865">
    <property type="term" value="P:1-deoxy-D-xylulose 5-phosphate biosynthetic process"/>
    <property type="evidence" value="ECO:0007669"/>
    <property type="project" value="UniProtKB-UniPathway"/>
</dbReference>
<dbReference type="GO" id="GO:0019288">
    <property type="term" value="P:isopentenyl diphosphate biosynthetic process, methylerythritol 4-phosphate pathway"/>
    <property type="evidence" value="ECO:0007669"/>
    <property type="project" value="TreeGrafter"/>
</dbReference>
<dbReference type="GO" id="GO:0016114">
    <property type="term" value="P:terpenoid biosynthetic process"/>
    <property type="evidence" value="ECO:0007669"/>
    <property type="project" value="UniProtKB-UniRule"/>
</dbReference>
<dbReference type="GO" id="GO:0009228">
    <property type="term" value="P:thiamine biosynthetic process"/>
    <property type="evidence" value="ECO:0007669"/>
    <property type="project" value="UniProtKB-UniRule"/>
</dbReference>
<dbReference type="CDD" id="cd02007">
    <property type="entry name" value="TPP_DXS"/>
    <property type="match status" value="1"/>
</dbReference>
<dbReference type="CDD" id="cd07033">
    <property type="entry name" value="TPP_PYR_DXS_TK_like"/>
    <property type="match status" value="1"/>
</dbReference>
<dbReference type="FunFam" id="3.40.50.920:FF:000002">
    <property type="entry name" value="1-deoxy-D-xylulose-5-phosphate synthase"/>
    <property type="match status" value="1"/>
</dbReference>
<dbReference type="FunFam" id="3.40.50.970:FF:000005">
    <property type="entry name" value="1-deoxy-D-xylulose-5-phosphate synthase"/>
    <property type="match status" value="1"/>
</dbReference>
<dbReference type="Gene3D" id="3.40.50.920">
    <property type="match status" value="1"/>
</dbReference>
<dbReference type="Gene3D" id="3.40.50.970">
    <property type="match status" value="2"/>
</dbReference>
<dbReference type="HAMAP" id="MF_00315">
    <property type="entry name" value="DXP_synth"/>
    <property type="match status" value="1"/>
</dbReference>
<dbReference type="InterPro" id="IPR005477">
    <property type="entry name" value="Dxylulose-5-P_synthase"/>
</dbReference>
<dbReference type="InterPro" id="IPR029061">
    <property type="entry name" value="THDP-binding"/>
</dbReference>
<dbReference type="InterPro" id="IPR009014">
    <property type="entry name" value="Transketo_C/PFOR_II"/>
</dbReference>
<dbReference type="InterPro" id="IPR005475">
    <property type="entry name" value="Transketolase-like_Pyr-bd"/>
</dbReference>
<dbReference type="InterPro" id="IPR020826">
    <property type="entry name" value="Transketolase_BS"/>
</dbReference>
<dbReference type="InterPro" id="IPR033248">
    <property type="entry name" value="Transketolase_C"/>
</dbReference>
<dbReference type="InterPro" id="IPR049557">
    <property type="entry name" value="Transketolase_CS"/>
</dbReference>
<dbReference type="NCBIfam" id="TIGR00204">
    <property type="entry name" value="dxs"/>
    <property type="match status" value="1"/>
</dbReference>
<dbReference type="NCBIfam" id="NF003933">
    <property type="entry name" value="PRK05444.2-2"/>
    <property type="match status" value="1"/>
</dbReference>
<dbReference type="PANTHER" id="PTHR43322">
    <property type="entry name" value="1-D-DEOXYXYLULOSE 5-PHOSPHATE SYNTHASE-RELATED"/>
    <property type="match status" value="1"/>
</dbReference>
<dbReference type="PANTHER" id="PTHR43322:SF5">
    <property type="entry name" value="1-DEOXY-D-XYLULOSE-5-PHOSPHATE SYNTHASE, CHLOROPLASTIC"/>
    <property type="match status" value="1"/>
</dbReference>
<dbReference type="Pfam" id="PF13292">
    <property type="entry name" value="DXP_synthase_N"/>
    <property type="match status" value="1"/>
</dbReference>
<dbReference type="Pfam" id="PF02779">
    <property type="entry name" value="Transket_pyr"/>
    <property type="match status" value="1"/>
</dbReference>
<dbReference type="Pfam" id="PF02780">
    <property type="entry name" value="Transketolase_C"/>
    <property type="match status" value="1"/>
</dbReference>
<dbReference type="SMART" id="SM00861">
    <property type="entry name" value="Transket_pyr"/>
    <property type="match status" value="1"/>
</dbReference>
<dbReference type="SUPFAM" id="SSF52518">
    <property type="entry name" value="Thiamin diphosphate-binding fold (THDP-binding)"/>
    <property type="match status" value="2"/>
</dbReference>
<dbReference type="SUPFAM" id="SSF52922">
    <property type="entry name" value="TK C-terminal domain-like"/>
    <property type="match status" value="1"/>
</dbReference>
<dbReference type="PROSITE" id="PS00801">
    <property type="entry name" value="TRANSKETOLASE_1"/>
    <property type="match status" value="1"/>
</dbReference>
<dbReference type="PROSITE" id="PS00802">
    <property type="entry name" value="TRANSKETOLASE_2"/>
    <property type="match status" value="1"/>
</dbReference>
<evidence type="ECO:0000255" key="1">
    <source>
        <dbReference type="HAMAP-Rule" id="MF_00315"/>
    </source>
</evidence>
<comment type="function">
    <text evidence="1">Catalyzes the acyloin condensation reaction between C atoms 2 and 3 of pyruvate and glyceraldehyde 3-phosphate to yield 1-deoxy-D-xylulose-5-phosphate (DXP).</text>
</comment>
<comment type="catalytic activity">
    <reaction evidence="1">
        <text>D-glyceraldehyde 3-phosphate + pyruvate + H(+) = 1-deoxy-D-xylulose 5-phosphate + CO2</text>
        <dbReference type="Rhea" id="RHEA:12605"/>
        <dbReference type="ChEBI" id="CHEBI:15361"/>
        <dbReference type="ChEBI" id="CHEBI:15378"/>
        <dbReference type="ChEBI" id="CHEBI:16526"/>
        <dbReference type="ChEBI" id="CHEBI:57792"/>
        <dbReference type="ChEBI" id="CHEBI:59776"/>
        <dbReference type="EC" id="2.2.1.7"/>
    </reaction>
</comment>
<comment type="cofactor">
    <cofactor evidence="1">
        <name>Mg(2+)</name>
        <dbReference type="ChEBI" id="CHEBI:18420"/>
    </cofactor>
    <text evidence="1">Binds 1 Mg(2+) ion per subunit.</text>
</comment>
<comment type="cofactor">
    <cofactor evidence="1">
        <name>thiamine diphosphate</name>
        <dbReference type="ChEBI" id="CHEBI:58937"/>
    </cofactor>
    <text evidence="1">Binds 1 thiamine pyrophosphate per subunit.</text>
</comment>
<comment type="pathway">
    <text evidence="1">Metabolic intermediate biosynthesis; 1-deoxy-D-xylulose 5-phosphate biosynthesis; 1-deoxy-D-xylulose 5-phosphate from D-glyceraldehyde 3-phosphate and pyruvate: step 1/1.</text>
</comment>
<comment type="subunit">
    <text evidence="1">Homodimer.</text>
</comment>
<comment type="similarity">
    <text evidence="1">Belongs to the transketolase family. DXPS subfamily.</text>
</comment>
<reference key="1">
    <citation type="journal article" date="2011" name="J. Bacteriol.">
        <title>Comparative genomics of 28 Salmonella enterica isolates: evidence for CRISPR-mediated adaptive sublineage evolution.</title>
        <authorList>
            <person name="Fricke W.F."/>
            <person name="Mammel M.K."/>
            <person name="McDermott P.F."/>
            <person name="Tartera C."/>
            <person name="White D.G."/>
            <person name="Leclerc J.E."/>
            <person name="Ravel J."/>
            <person name="Cebula T.A."/>
        </authorList>
    </citation>
    <scope>NUCLEOTIDE SEQUENCE [LARGE SCALE GENOMIC DNA]</scope>
    <source>
        <strain>CT_02021853</strain>
    </source>
</reference>
<organism>
    <name type="scientific">Salmonella dublin (strain CT_02021853)</name>
    <dbReference type="NCBI Taxonomy" id="439851"/>
    <lineage>
        <taxon>Bacteria</taxon>
        <taxon>Pseudomonadati</taxon>
        <taxon>Pseudomonadota</taxon>
        <taxon>Gammaproteobacteria</taxon>
        <taxon>Enterobacterales</taxon>
        <taxon>Enterobacteriaceae</taxon>
        <taxon>Salmonella</taxon>
    </lineage>
</organism>
<proteinExistence type="inferred from homology"/>
<accession>B5FKS7</accession>
<keyword id="KW-0414">Isoprene biosynthesis</keyword>
<keyword id="KW-0460">Magnesium</keyword>
<keyword id="KW-0479">Metal-binding</keyword>
<keyword id="KW-0784">Thiamine biosynthesis</keyword>
<keyword id="KW-0786">Thiamine pyrophosphate</keyword>
<keyword id="KW-0808">Transferase</keyword>
<sequence>MSFDIAKYPTLALVDSTQELRLLPKESLPKLCDELRRYLLDSVSRSSGHFASGLGTVELTVALHYVYNTPFDQLIWDVGHQAYPHKILTGRRDKIGTIRQKGGLHPFPWRGESEYDVLSVGHSSTSISAGIGIAVAAEKEGKDRRTVCVIGDGAITAGMAFEAMNHAGDIRPDMLVILNDNEMSISENVGALNNHLAQLLSGKLYSSLREGGKKVFSGVPPIKELLKRTEEHIKGMVVPGTLFEELGFNYIGPVDGHDVMGLISTLKNMRDLKGPQFLHIMTKKGRGYEPAEKDPITFHAVPKFDPSSGCLPKSSGGLPGYSKIFGDWLCETAAKDSKLMAITPAMREGSGMVEFSRKFPDRYFDVAIAEQHAVTFAAGLAIGGYKPVVAIYSTFLQRAYDQVIHDVAIQKLPVMFAIDRAGIVGADGQTHQGAFDLSYLRCIPDMVIMTPSDENECRQMLFTGYHYNDGPTAVRYPRGNAQGVALTPLEKLPIGKGLVKRHGEKLAILNFGTLMPEAAKVAEALNATLVDMRFVKPLDDTLILEMAAQHDALVTLEENAIMGGAGSGVNEVLMAHRKPVPVLNIGLPDFFIPQGTQEEARAELGLDAAGIEAKIKAWLA</sequence>